<reference key="1">
    <citation type="journal article" date="2000" name="Eur. J. Biochem.">
        <title>The evolutionarily conserved porcupine gene family is involved in the processing of the Wnt family.</title>
        <authorList>
            <person name="Tanaka K."/>
            <person name="Okabayashi H."/>
            <person name="Asashima M."/>
            <person name="Perrimon N."/>
            <person name="Kadowaki T."/>
        </authorList>
    </citation>
    <scope>NUCLEOTIDE SEQUENCE [MRNA] (ISOFORMS 1; 2; 3 AND 4)</scope>
    <scope>FUNCTION IN WNT PROTEINS PROCESSING</scope>
    <scope>INTERACTION WITH WNT1; WNT3; WNT3A; WNT4; WNT5A; WNT5B; WNT6; WNT7A AND WNT7B</scope>
    <scope>ALTERNATIVE SPLICING</scope>
    <scope>SUBCELLULAR LOCATION</scope>
    <scope>DEVELOPMENTAL STAGE</scope>
    <scope>TISSUE SPECIFICITY</scope>
    <source>
        <tissue>Brain</tissue>
    </source>
</reference>
<reference key="2">
    <citation type="journal article" date="2005" name="Science">
        <title>The transcriptional landscape of the mammalian genome.</title>
        <authorList>
            <person name="Carninci P."/>
            <person name="Kasukawa T."/>
            <person name="Katayama S."/>
            <person name="Gough J."/>
            <person name="Frith M.C."/>
            <person name="Maeda N."/>
            <person name="Oyama R."/>
            <person name="Ravasi T."/>
            <person name="Lenhard B."/>
            <person name="Wells C."/>
            <person name="Kodzius R."/>
            <person name="Shimokawa K."/>
            <person name="Bajic V.B."/>
            <person name="Brenner S.E."/>
            <person name="Batalov S."/>
            <person name="Forrest A.R."/>
            <person name="Zavolan M."/>
            <person name="Davis M.J."/>
            <person name="Wilming L.G."/>
            <person name="Aidinis V."/>
            <person name="Allen J.E."/>
            <person name="Ambesi-Impiombato A."/>
            <person name="Apweiler R."/>
            <person name="Aturaliya R.N."/>
            <person name="Bailey T.L."/>
            <person name="Bansal M."/>
            <person name="Baxter L."/>
            <person name="Beisel K.W."/>
            <person name="Bersano T."/>
            <person name="Bono H."/>
            <person name="Chalk A.M."/>
            <person name="Chiu K.P."/>
            <person name="Choudhary V."/>
            <person name="Christoffels A."/>
            <person name="Clutterbuck D.R."/>
            <person name="Crowe M.L."/>
            <person name="Dalla E."/>
            <person name="Dalrymple B.P."/>
            <person name="de Bono B."/>
            <person name="Della Gatta G."/>
            <person name="di Bernardo D."/>
            <person name="Down T."/>
            <person name="Engstrom P."/>
            <person name="Fagiolini M."/>
            <person name="Faulkner G."/>
            <person name="Fletcher C.F."/>
            <person name="Fukushima T."/>
            <person name="Furuno M."/>
            <person name="Futaki S."/>
            <person name="Gariboldi M."/>
            <person name="Georgii-Hemming P."/>
            <person name="Gingeras T.R."/>
            <person name="Gojobori T."/>
            <person name="Green R.E."/>
            <person name="Gustincich S."/>
            <person name="Harbers M."/>
            <person name="Hayashi Y."/>
            <person name="Hensch T.K."/>
            <person name="Hirokawa N."/>
            <person name="Hill D."/>
            <person name="Huminiecki L."/>
            <person name="Iacono M."/>
            <person name="Ikeo K."/>
            <person name="Iwama A."/>
            <person name="Ishikawa T."/>
            <person name="Jakt M."/>
            <person name="Kanapin A."/>
            <person name="Katoh M."/>
            <person name="Kawasawa Y."/>
            <person name="Kelso J."/>
            <person name="Kitamura H."/>
            <person name="Kitano H."/>
            <person name="Kollias G."/>
            <person name="Krishnan S.P."/>
            <person name="Kruger A."/>
            <person name="Kummerfeld S.K."/>
            <person name="Kurochkin I.V."/>
            <person name="Lareau L.F."/>
            <person name="Lazarevic D."/>
            <person name="Lipovich L."/>
            <person name="Liu J."/>
            <person name="Liuni S."/>
            <person name="McWilliam S."/>
            <person name="Madan Babu M."/>
            <person name="Madera M."/>
            <person name="Marchionni L."/>
            <person name="Matsuda H."/>
            <person name="Matsuzawa S."/>
            <person name="Miki H."/>
            <person name="Mignone F."/>
            <person name="Miyake S."/>
            <person name="Morris K."/>
            <person name="Mottagui-Tabar S."/>
            <person name="Mulder N."/>
            <person name="Nakano N."/>
            <person name="Nakauchi H."/>
            <person name="Ng P."/>
            <person name="Nilsson R."/>
            <person name="Nishiguchi S."/>
            <person name="Nishikawa S."/>
            <person name="Nori F."/>
            <person name="Ohara O."/>
            <person name="Okazaki Y."/>
            <person name="Orlando V."/>
            <person name="Pang K.C."/>
            <person name="Pavan W.J."/>
            <person name="Pavesi G."/>
            <person name="Pesole G."/>
            <person name="Petrovsky N."/>
            <person name="Piazza S."/>
            <person name="Reed J."/>
            <person name="Reid J.F."/>
            <person name="Ring B.Z."/>
            <person name="Ringwald M."/>
            <person name="Rost B."/>
            <person name="Ruan Y."/>
            <person name="Salzberg S.L."/>
            <person name="Sandelin A."/>
            <person name="Schneider C."/>
            <person name="Schoenbach C."/>
            <person name="Sekiguchi K."/>
            <person name="Semple C.A."/>
            <person name="Seno S."/>
            <person name="Sessa L."/>
            <person name="Sheng Y."/>
            <person name="Shibata Y."/>
            <person name="Shimada H."/>
            <person name="Shimada K."/>
            <person name="Silva D."/>
            <person name="Sinclair B."/>
            <person name="Sperling S."/>
            <person name="Stupka E."/>
            <person name="Sugiura K."/>
            <person name="Sultana R."/>
            <person name="Takenaka Y."/>
            <person name="Taki K."/>
            <person name="Tammoja K."/>
            <person name="Tan S.L."/>
            <person name="Tang S."/>
            <person name="Taylor M.S."/>
            <person name="Tegner J."/>
            <person name="Teichmann S.A."/>
            <person name="Ueda H.R."/>
            <person name="van Nimwegen E."/>
            <person name="Verardo R."/>
            <person name="Wei C.L."/>
            <person name="Yagi K."/>
            <person name="Yamanishi H."/>
            <person name="Zabarovsky E."/>
            <person name="Zhu S."/>
            <person name="Zimmer A."/>
            <person name="Hide W."/>
            <person name="Bult C."/>
            <person name="Grimmond S.M."/>
            <person name="Teasdale R.D."/>
            <person name="Liu E.T."/>
            <person name="Brusic V."/>
            <person name="Quackenbush J."/>
            <person name="Wahlestedt C."/>
            <person name="Mattick J.S."/>
            <person name="Hume D.A."/>
            <person name="Kai C."/>
            <person name="Sasaki D."/>
            <person name="Tomaru Y."/>
            <person name="Fukuda S."/>
            <person name="Kanamori-Katayama M."/>
            <person name="Suzuki M."/>
            <person name="Aoki J."/>
            <person name="Arakawa T."/>
            <person name="Iida J."/>
            <person name="Imamura K."/>
            <person name="Itoh M."/>
            <person name="Kato T."/>
            <person name="Kawaji H."/>
            <person name="Kawagashira N."/>
            <person name="Kawashima T."/>
            <person name="Kojima M."/>
            <person name="Kondo S."/>
            <person name="Konno H."/>
            <person name="Nakano K."/>
            <person name="Ninomiya N."/>
            <person name="Nishio T."/>
            <person name="Okada M."/>
            <person name="Plessy C."/>
            <person name="Shibata K."/>
            <person name="Shiraki T."/>
            <person name="Suzuki S."/>
            <person name="Tagami M."/>
            <person name="Waki K."/>
            <person name="Watahiki A."/>
            <person name="Okamura-Oho Y."/>
            <person name="Suzuki H."/>
            <person name="Kawai J."/>
            <person name="Hayashizaki Y."/>
        </authorList>
    </citation>
    <scope>NUCLEOTIDE SEQUENCE [LARGE SCALE MRNA] (ISOFORM 5)</scope>
    <source>
        <strain>C57BL/6J</strain>
        <tissue>Embryonic stem cell</tissue>
    </source>
</reference>
<reference key="3">
    <citation type="journal article" date="2009" name="PLoS Biol.">
        <title>Lineage-specific biology revealed by a finished genome assembly of the mouse.</title>
        <authorList>
            <person name="Church D.M."/>
            <person name="Goodstadt L."/>
            <person name="Hillier L.W."/>
            <person name="Zody M.C."/>
            <person name="Goldstein S."/>
            <person name="She X."/>
            <person name="Bult C.J."/>
            <person name="Agarwala R."/>
            <person name="Cherry J.L."/>
            <person name="DiCuccio M."/>
            <person name="Hlavina W."/>
            <person name="Kapustin Y."/>
            <person name="Meric P."/>
            <person name="Maglott D."/>
            <person name="Birtle Z."/>
            <person name="Marques A.C."/>
            <person name="Graves T."/>
            <person name="Zhou S."/>
            <person name="Teague B."/>
            <person name="Potamousis K."/>
            <person name="Churas C."/>
            <person name="Place M."/>
            <person name="Herschleb J."/>
            <person name="Runnheim R."/>
            <person name="Forrest D."/>
            <person name="Amos-Landgraf J."/>
            <person name="Schwartz D.C."/>
            <person name="Cheng Z."/>
            <person name="Lindblad-Toh K."/>
            <person name="Eichler E.E."/>
            <person name="Ponting C.P."/>
        </authorList>
    </citation>
    <scope>NUCLEOTIDE SEQUENCE [LARGE SCALE GENOMIC DNA]</scope>
    <source>
        <strain>C57BL/6J</strain>
    </source>
</reference>
<reference key="4">
    <citation type="journal article" date="2004" name="Genome Res.">
        <title>The status, quality, and expansion of the NIH full-length cDNA project: the Mammalian Gene Collection (MGC).</title>
        <authorList>
            <consortium name="The MGC Project Team"/>
        </authorList>
    </citation>
    <scope>NUCLEOTIDE SEQUENCE [LARGE SCALE MRNA] (ISOFORM 3)</scope>
    <source>
        <strain>C57BL/6J</strain>
        <tissue>Eye</tissue>
    </source>
</reference>
<reference key="5">
    <citation type="journal article" date="2003" name="Cell Biol. Int.">
        <title>Misexpression of mouse porcupine isoforms modulates the differentiation of P19 embryonic carcinoma cells.</title>
        <authorList>
            <person name="Tanaka K."/>
            <person name="Kitagawa Y."/>
            <person name="Kadowaki T."/>
        </authorList>
    </citation>
    <scope>ALTERNATIVE SPLICING (ISOFORMS 1; 2; 3 AND 4)</scope>
</reference>
<reference key="6">
    <citation type="journal article" date="2006" name="Dev. Cell">
        <title>Monounsaturated fatty acid modification of Wnt protein: its role in Wnt secretion.</title>
        <authorList>
            <person name="Takada R."/>
            <person name="Satomi Y."/>
            <person name="Kurata T."/>
            <person name="Ueno N."/>
            <person name="Norioka S."/>
            <person name="Kondoh H."/>
            <person name="Takao T."/>
            <person name="Takada S."/>
        </authorList>
    </citation>
    <scope>FUNCTION</scope>
    <scope>CATALYTIC ACTIVITY</scope>
</reference>
<reference key="7">
    <citation type="journal article" date="2011" name="PLoS ONE">
        <title>Differential palmit(e)oylation of Wnt1 on C93 and S224 residues has overlapping and distinct consequences.</title>
        <authorList>
            <person name="Galli L.M."/>
            <person name="Burrus L.W."/>
        </authorList>
    </citation>
    <scope>FUNCTION</scope>
</reference>
<reference key="8">
    <citation type="journal article" date="2013" name="Cell Rep.">
        <title>Stearoyl CoA desaturase is required to produce active, lipid-modified Wnt proteins.</title>
        <authorList>
            <person name="Rios-Esteves J."/>
            <person name="Resh M.D."/>
        </authorList>
    </citation>
    <scope>FUNCTION</scope>
</reference>
<reference key="9">
    <citation type="journal article" date="2014" name="J. Biol. Chem.">
        <title>Identification of key residues and regions important for porcupine-mediated Wnt acylation.</title>
        <authorList>
            <person name="Rios-Esteves J."/>
            <person name="Haugen B."/>
            <person name="Resh M.D."/>
        </authorList>
    </citation>
    <scope>FUNCTION</scope>
    <scope>CATALYTIC ACTIVITY</scope>
    <scope>SUBCELLULAR LOCATION</scope>
    <scope>INTERACTION WITH WNT3A</scope>
    <scope>ACTIVE SITE</scope>
    <scope>MUTAGENESIS OF SER-136; SER-172; ARG-228; TRP-305; ASN-306; TRP-312; TYR-316; LEU-331; TYR-334; SER-337; LEU-340; HIS-341 AND ARG-365</scope>
</reference>
<keyword id="KW-0012">Acyltransferase</keyword>
<keyword id="KW-0025">Alternative splicing</keyword>
<keyword id="KW-0256">Endoplasmic reticulum</keyword>
<keyword id="KW-0472">Membrane</keyword>
<keyword id="KW-1185">Reference proteome</keyword>
<keyword id="KW-0808">Transferase</keyword>
<keyword id="KW-0812">Transmembrane</keyword>
<keyword id="KW-1133">Transmembrane helix</keyword>
<keyword id="KW-0879">Wnt signaling pathway</keyword>
<proteinExistence type="evidence at protein level"/>
<protein>
    <recommendedName>
        <fullName evidence="10">Protein-serine O-palmitoleoyltransferase porcupine</fullName>
        <shortName>mPORC</shortName>
        <ecNumber evidence="3 6">2.3.1.250</ecNumber>
    </recommendedName>
</protein>
<feature type="chain" id="PRO_0000213138" description="Protein-serine O-palmitoleoyltransferase porcupine">
    <location>
        <begin position="1"/>
        <end position="461"/>
    </location>
</feature>
<feature type="topological domain" description="Cytoplasmic" evidence="1">
    <location>
        <begin position="1"/>
        <end position="17"/>
    </location>
</feature>
<feature type="transmembrane region" description="Helical" evidence="1">
    <location>
        <begin position="18"/>
        <end position="38"/>
    </location>
</feature>
<feature type="topological domain" description="Extracellular" evidence="1">
    <location>
        <begin position="39"/>
        <end position="66"/>
    </location>
</feature>
<feature type="transmembrane region" description="Helical" evidence="1">
    <location>
        <begin position="67"/>
        <end position="87"/>
    </location>
</feature>
<feature type="topological domain" description="Cytoplasmic" evidence="1">
    <location>
        <begin position="88"/>
        <end position="95"/>
    </location>
</feature>
<feature type="transmembrane region" description="Helical" evidence="1">
    <location>
        <begin position="96"/>
        <end position="116"/>
    </location>
</feature>
<feature type="topological domain" description="Extracellular" evidence="1">
    <location>
        <begin position="117"/>
        <end position="152"/>
    </location>
</feature>
<feature type="transmembrane region" description="Helical" evidence="1">
    <location>
        <begin position="153"/>
        <end position="173"/>
    </location>
</feature>
<feature type="topological domain" description="Cytoplasmic" evidence="1">
    <location>
        <begin position="174"/>
        <end position="198"/>
    </location>
</feature>
<feature type="transmembrane region" description="Helical" evidence="1">
    <location>
        <begin position="199"/>
        <end position="219"/>
    </location>
</feature>
<feature type="topological domain" description="Extracellular" evidence="1">
    <location>
        <begin position="220"/>
        <end position="252"/>
    </location>
</feature>
<feature type="transmembrane region" description="Helical" evidence="1">
    <location>
        <begin position="253"/>
        <end position="273"/>
    </location>
</feature>
<feature type="topological domain" description="Cytoplasmic" evidence="1">
    <location>
        <begin position="274"/>
        <end position="337"/>
    </location>
</feature>
<feature type="transmembrane region" description="Helical" evidence="1">
    <location>
        <begin position="338"/>
        <end position="358"/>
    </location>
</feature>
<feature type="topological domain" description="Extracellular" evidence="1">
    <location>
        <begin position="359"/>
        <end position="396"/>
    </location>
</feature>
<feature type="transmembrane region" description="Helical" evidence="1">
    <location>
        <begin position="397"/>
        <end position="417"/>
    </location>
</feature>
<feature type="topological domain" description="Cytoplasmic" evidence="1">
    <location>
        <begin position="418"/>
        <end position="461"/>
    </location>
</feature>
<feature type="active site" evidence="6">
    <location>
        <position position="341"/>
    </location>
</feature>
<feature type="splice variant" id="VSP_015889" description="In isoform 5." evidence="9">
    <location>
        <begin position="1"/>
        <end position="234"/>
    </location>
</feature>
<feature type="splice variant" id="VSP_015890" description="In isoform 4." evidence="7">
    <original>NKKRKARGTMVR</original>
    <variation>K</variation>
    <location>
        <begin position="229"/>
        <end position="240"/>
    </location>
</feature>
<feature type="splice variant" id="VSP_015891" description="In isoform 3." evidence="7 8">
    <original>NKKRKAR</original>
    <variation>K</variation>
    <location>
        <begin position="229"/>
        <end position="235"/>
    </location>
</feature>
<feature type="splice variant" id="VSP_015892" description="In isoform 2." evidence="7">
    <location>
        <begin position="235"/>
        <end position="239"/>
    </location>
</feature>
<feature type="splice variant" id="VSP_015893" description="In isoform 5." evidence="9">
    <original>RGTMV</original>
    <variation>MAQDA</variation>
    <location>
        <begin position="235"/>
        <end position="239"/>
    </location>
</feature>
<feature type="mutagenesis site" description="Impaired acyltransferase activity." evidence="6">
    <original>S</original>
    <variation>F</variation>
    <location>
        <position position="136"/>
    </location>
</feature>
<feature type="mutagenesis site" description="Does not affect acyltransferase activity." evidence="6">
    <original>S</original>
    <variation>A</variation>
    <location>
        <position position="172"/>
    </location>
</feature>
<feature type="mutagenesis site" description="Does not affect acyltransferase activity." evidence="6">
    <original>R</original>
    <variation>C</variation>
    <location>
        <position position="228"/>
    </location>
</feature>
<feature type="mutagenesis site" description="Impaired acyltransferase activity." evidence="6">
    <original>W</original>
    <variation>A</variation>
    <location>
        <position position="305"/>
    </location>
</feature>
<feature type="mutagenesis site" description="Does not affect acyltransferase activity." evidence="6">
    <original>N</original>
    <variation>A</variation>
    <location>
        <position position="306"/>
    </location>
</feature>
<feature type="mutagenesis site" description="Does not affect acyltransferase activity." evidence="6">
    <original>W</original>
    <variation>A</variation>
    <location>
        <position position="312"/>
    </location>
</feature>
<feature type="mutagenesis site" description="Impaired acyltransferase activity." evidence="6">
    <original>Y</original>
    <variation>A</variation>
    <location>
        <position position="316"/>
    </location>
</feature>
<feature type="mutagenesis site" description="Impaired acyltransferase activity." evidence="6">
    <original>L</original>
    <variation>R</variation>
    <location>
        <position position="331"/>
    </location>
</feature>
<feature type="mutagenesis site" description="Impaired acyltransferase activity. Impaired ability to interact with WNT3A." evidence="6">
    <original>Y</original>
    <variation>A</variation>
    <location>
        <position position="334"/>
    </location>
</feature>
<feature type="mutagenesis site" description="Abolished acyltransferase activity. Impaired ability to interact with WNT3A." evidence="6">
    <original>S</original>
    <variation>A</variation>
    <location>
        <position position="337"/>
    </location>
</feature>
<feature type="mutagenesis site" description="Abolished acyltransferase activity." evidence="6">
    <original>L</original>
    <variation>A</variation>
    <location>
        <position position="340"/>
    </location>
</feature>
<feature type="mutagenesis site" description="Abolished acyltransferase activity. Impaired ability to interact with WNT3A." evidence="6">
    <original>H</original>
    <variation>A</variation>
    <location>
        <position position="341"/>
    </location>
</feature>
<feature type="mutagenesis site" description="Impaired acyltransferase activity." evidence="6">
    <original>R</original>
    <variation>Q</variation>
    <location>
        <position position="365"/>
    </location>
</feature>
<gene>
    <name evidence="11" type="primary">Porcn</name>
    <name type="synonym">Porc</name>
    <name type="synonym">Ppn</name>
</gene>
<organism>
    <name type="scientific">Mus musculus</name>
    <name type="common">Mouse</name>
    <dbReference type="NCBI Taxonomy" id="10090"/>
    <lineage>
        <taxon>Eukaryota</taxon>
        <taxon>Metazoa</taxon>
        <taxon>Chordata</taxon>
        <taxon>Craniata</taxon>
        <taxon>Vertebrata</taxon>
        <taxon>Euteleostomi</taxon>
        <taxon>Mammalia</taxon>
        <taxon>Eutheria</taxon>
        <taxon>Euarchontoglires</taxon>
        <taxon>Glires</taxon>
        <taxon>Rodentia</taxon>
        <taxon>Myomorpha</taxon>
        <taxon>Muroidea</taxon>
        <taxon>Muridae</taxon>
        <taxon>Murinae</taxon>
        <taxon>Mus</taxon>
        <taxon>Mus</taxon>
    </lineage>
</organism>
<name>PORCN_MOUSE</name>
<accession>Q9JJJ7</accession>
<accession>A2AC30</accession>
<accession>A2AC32</accession>
<accession>A2AC33</accession>
<accession>Q9CWT0</accession>
<accession>Q9JJJ8</accession>
<accession>Q9JJJ9</accession>
<accession>Q9JJK0</accession>
<comment type="function">
    <text evidence="2 3 4 5 6">Protein-serine O-palmitoleoyltransferase that acts as a key regulator of the Wnt signaling pathway by mediating the attachment of palmitoleate, a 16-carbon monounsaturated fatty acid (C16:1(9Z)), to Wnt proteins. Serine palmitoleoylation of WNT proteins is required for efficient binding to frizzled receptors.</text>
</comment>
<comment type="catalytic activity">
    <reaction evidence="3 6">
        <text>[Wnt protein]-L-serine + (9Z)-hexadecenoyl-CoA = [Wnt protein]-O-(9Z)-hexadecenoyl-L-serine + CoA</text>
        <dbReference type="Rhea" id="RHEA:45336"/>
        <dbReference type="Rhea" id="RHEA-COMP:11170"/>
        <dbReference type="Rhea" id="RHEA-COMP:11171"/>
        <dbReference type="ChEBI" id="CHEBI:29999"/>
        <dbReference type="ChEBI" id="CHEBI:57287"/>
        <dbReference type="ChEBI" id="CHEBI:61540"/>
        <dbReference type="ChEBI" id="CHEBI:85189"/>
        <dbReference type="EC" id="2.3.1.250"/>
    </reaction>
</comment>
<comment type="subunit">
    <text evidence="2 6">Interacts with WNT1, WNT3, WNT3A, WNT4, WNT5A, WNT5B, WNT6, WNT7A and WNT7B.</text>
</comment>
<comment type="subcellular location">
    <subcellularLocation>
        <location evidence="2 6">Endoplasmic reticulum membrane</location>
        <topology evidence="2">Multi-pass membrane protein</topology>
    </subcellularLocation>
</comment>
<comment type="alternative products">
    <event type="alternative splicing"/>
    <isoform>
        <id>Q9JJJ7-1</id>
        <name>1</name>
        <name>D</name>
        <sequence type="displayed"/>
    </isoform>
    <isoform>
        <id>Q9JJJ7-2</id>
        <name>2</name>
        <name>B</name>
        <sequence type="described" ref="VSP_015892"/>
    </isoform>
    <isoform>
        <id>Q9JJJ7-3</id>
        <name>3</name>
        <name>C</name>
        <sequence type="described" ref="VSP_015891"/>
    </isoform>
    <isoform>
        <id>Q9JJJ7-4</id>
        <name>4</name>
        <name>A</name>
        <sequence type="described" ref="VSP_015890"/>
    </isoform>
    <isoform>
        <id>Q9JJJ7-5</id>
        <name>5</name>
        <sequence type="described" ref="VSP_015889 VSP_015893"/>
    </isoform>
</comment>
<comment type="tissue specificity">
    <text evidence="2">Expressed in brain, heart, kidney, liver, lung, muscle, spleen and testis. Isoform 4 is strongly expressed in kidney, liver, lung, spleen and testis. Isoform 1 is strongly expressed in brain, heart and muscle and poorly in kidney, liver, lung, spleen and testis.</text>
</comment>
<comment type="developmental stage">
    <text evidence="2">Isoform 1, isoform 2, isoform 3 and isoform 4 are expressed at different levels in embryo at 9.5, 10.5, 11.5, 12.5, 13.5 and 15.5 dpc.</text>
</comment>
<comment type="similarity">
    <text evidence="10">Belongs to the membrane-bound acyltransferase family. Porcupine subfamily.</text>
</comment>
<comment type="caution">
    <text evidence="3 6">Was initially thought to mediate palmitoylation of Wnt proteins. It was later shown that instead it acts as a serine O-palmitoleoyltransferase that mediates the attachment of palmitoleate, a 16-carbon monounsaturated fatty acid (C16:1(9Z)), to Wnt proteins (PubMed:17141155, PubMed:24798332).</text>
</comment>
<dbReference type="EC" id="2.3.1.250" evidence="3 6"/>
<dbReference type="EMBL" id="AB036746">
    <property type="protein sequence ID" value="BAA89467.1"/>
    <property type="molecule type" value="mRNA"/>
</dbReference>
<dbReference type="EMBL" id="AB036747">
    <property type="protein sequence ID" value="BAA89468.1"/>
    <property type="molecule type" value="mRNA"/>
</dbReference>
<dbReference type="EMBL" id="AB036748">
    <property type="protein sequence ID" value="BAA89469.1"/>
    <property type="molecule type" value="mRNA"/>
</dbReference>
<dbReference type="EMBL" id="AB036749">
    <property type="protein sequence ID" value="BAA89470.1"/>
    <property type="molecule type" value="mRNA"/>
</dbReference>
<dbReference type="EMBL" id="AK010405">
    <property type="protein sequence ID" value="BAB26914.1"/>
    <property type="molecule type" value="mRNA"/>
</dbReference>
<dbReference type="EMBL" id="AL663032">
    <property type="status" value="NOT_ANNOTATED_CDS"/>
    <property type="molecule type" value="Genomic_DNA"/>
</dbReference>
<dbReference type="EMBL" id="BC032284">
    <property type="protein sequence ID" value="AAH32284.1"/>
    <property type="molecule type" value="mRNA"/>
</dbReference>
<dbReference type="CCDS" id="CCDS29990.1">
    <molecule id="Q9JJJ7-4"/>
</dbReference>
<dbReference type="CCDS" id="CCDS29991.1">
    <molecule id="Q9JJJ7-1"/>
</dbReference>
<dbReference type="CCDS" id="CCDS29992.1">
    <molecule id="Q9JJJ7-3"/>
</dbReference>
<dbReference type="CCDS" id="CCDS29993.1">
    <molecule id="Q9JJJ7-2"/>
</dbReference>
<dbReference type="RefSeq" id="NP_001295403.1">
    <molecule id="Q9JJJ7-5"/>
    <property type="nucleotide sequence ID" value="NM_001308474.1"/>
</dbReference>
<dbReference type="RefSeq" id="NP_058609.1">
    <molecule id="Q9JJJ7-4"/>
    <property type="nucleotide sequence ID" value="NM_016913.4"/>
</dbReference>
<dbReference type="RefSeq" id="NP_076127.1">
    <molecule id="Q9JJJ7-1"/>
    <property type="nucleotide sequence ID" value="NM_023638.4"/>
</dbReference>
<dbReference type="RefSeq" id="NP_665914.1">
    <molecule id="Q9JJJ7-3"/>
    <property type="nucleotide sequence ID" value="NM_145907.4"/>
</dbReference>
<dbReference type="RefSeq" id="NP_665915.1">
    <molecule id="Q9JJJ7-2"/>
    <property type="nucleotide sequence ID" value="NM_145908.4"/>
</dbReference>
<dbReference type="SMR" id="Q9JJJ7"/>
<dbReference type="BioGRID" id="207344">
    <property type="interactions" value="9"/>
</dbReference>
<dbReference type="FunCoup" id="Q9JJJ7">
    <property type="interactions" value="725"/>
</dbReference>
<dbReference type="IntAct" id="Q9JJJ7">
    <property type="interactions" value="7"/>
</dbReference>
<dbReference type="STRING" id="10090.ENSMUSP00000076790"/>
<dbReference type="BindingDB" id="Q9JJJ7"/>
<dbReference type="ChEMBL" id="CHEMBL1255164"/>
<dbReference type="iPTMnet" id="Q9JJJ7"/>
<dbReference type="PhosphoSitePlus" id="Q9JJJ7"/>
<dbReference type="PaxDb" id="10090-ENSMUSP00000076790"/>
<dbReference type="ProteomicsDB" id="291767">
    <molecule id="Q9JJJ7-1"/>
</dbReference>
<dbReference type="ProteomicsDB" id="291768">
    <molecule id="Q9JJJ7-2"/>
</dbReference>
<dbReference type="ProteomicsDB" id="291769">
    <molecule id="Q9JJJ7-3"/>
</dbReference>
<dbReference type="ProteomicsDB" id="291770">
    <molecule id="Q9JJJ7-4"/>
</dbReference>
<dbReference type="ProteomicsDB" id="291771">
    <molecule id="Q9JJJ7-5"/>
</dbReference>
<dbReference type="Antibodypedia" id="25667">
    <property type="antibodies" value="106 antibodies from 21 providers"/>
</dbReference>
<dbReference type="DNASU" id="53627"/>
<dbReference type="Ensembl" id="ENSMUST00000077595.12">
    <molecule id="Q9JJJ7-1"/>
    <property type="protein sequence ID" value="ENSMUSP00000076790.6"/>
    <property type="gene ID" value="ENSMUSG00000031169.14"/>
</dbReference>
<dbReference type="Ensembl" id="ENSMUST00000082320.12">
    <molecule id="Q9JJJ7-2"/>
    <property type="protein sequence ID" value="ENSMUSP00000080937.6"/>
    <property type="gene ID" value="ENSMUSG00000031169.14"/>
</dbReference>
<dbReference type="Ensembl" id="ENSMUST00000089402.10">
    <molecule id="Q9JJJ7-4"/>
    <property type="protein sequence ID" value="ENSMUSP00000086824.4"/>
    <property type="gene ID" value="ENSMUSG00000031169.14"/>
</dbReference>
<dbReference type="Ensembl" id="ENSMUST00000089403.10">
    <molecule id="Q9JJJ7-3"/>
    <property type="protein sequence ID" value="ENSMUSP00000086825.4"/>
    <property type="gene ID" value="ENSMUSG00000031169.14"/>
</dbReference>
<dbReference type="GeneID" id="53627"/>
<dbReference type="KEGG" id="mmu:53627"/>
<dbReference type="UCSC" id="uc009soj.2">
    <molecule id="Q9JJJ7-1"/>
    <property type="organism name" value="mouse"/>
</dbReference>
<dbReference type="UCSC" id="uc009sok.2">
    <molecule id="Q9JJJ7-2"/>
    <property type="organism name" value="mouse"/>
</dbReference>
<dbReference type="UCSC" id="uc009sol.2">
    <molecule id="Q9JJJ7-3"/>
    <property type="organism name" value="mouse"/>
</dbReference>
<dbReference type="UCSC" id="uc009som.2">
    <molecule id="Q9JJJ7-4"/>
    <property type="organism name" value="mouse"/>
</dbReference>
<dbReference type="UCSC" id="uc012heo.1">
    <molecule id="Q9JJJ7-5"/>
    <property type="organism name" value="mouse"/>
</dbReference>
<dbReference type="AGR" id="MGI:1890212"/>
<dbReference type="CTD" id="64840"/>
<dbReference type="MGI" id="MGI:1890212">
    <property type="gene designation" value="Porcn"/>
</dbReference>
<dbReference type="VEuPathDB" id="HostDB:ENSMUSG00000031169"/>
<dbReference type="eggNOG" id="KOG4312">
    <property type="taxonomic scope" value="Eukaryota"/>
</dbReference>
<dbReference type="GeneTree" id="ENSGT01030000234564"/>
<dbReference type="HOGENOM" id="CLU_048745_0_0_1"/>
<dbReference type="InParanoid" id="Q9JJJ7"/>
<dbReference type="OMA" id="WRQRSDW"/>
<dbReference type="OrthoDB" id="5968863at2759"/>
<dbReference type="PhylomeDB" id="Q9JJJ7"/>
<dbReference type="TreeFam" id="TF313724"/>
<dbReference type="BRENDA" id="2.3.1.250">
    <property type="organism ID" value="3474"/>
</dbReference>
<dbReference type="BioGRID-ORCS" id="53627">
    <property type="hits" value="1 hit in 76 CRISPR screens"/>
</dbReference>
<dbReference type="PRO" id="PR:Q9JJJ7"/>
<dbReference type="Proteomes" id="UP000000589">
    <property type="component" value="Chromosome X"/>
</dbReference>
<dbReference type="RNAct" id="Q9JJJ7">
    <property type="molecule type" value="protein"/>
</dbReference>
<dbReference type="Bgee" id="ENSMUSG00000031169">
    <property type="expression patterns" value="Expressed in primary visual cortex and 177 other cell types or tissues"/>
</dbReference>
<dbReference type="ExpressionAtlas" id="Q9JJJ7">
    <property type="expression patterns" value="baseline and differential"/>
</dbReference>
<dbReference type="GO" id="GO:0032281">
    <property type="term" value="C:AMPA glutamate receptor complex"/>
    <property type="evidence" value="ECO:0000314"/>
    <property type="project" value="MGI"/>
</dbReference>
<dbReference type="GO" id="GO:0005783">
    <property type="term" value="C:endoplasmic reticulum"/>
    <property type="evidence" value="ECO:0000314"/>
    <property type="project" value="UniProtKB"/>
</dbReference>
<dbReference type="GO" id="GO:0005789">
    <property type="term" value="C:endoplasmic reticulum membrane"/>
    <property type="evidence" value="ECO:0000314"/>
    <property type="project" value="MGI"/>
</dbReference>
<dbReference type="GO" id="GO:0098978">
    <property type="term" value="C:glutamatergic synapse"/>
    <property type="evidence" value="ECO:0000314"/>
    <property type="project" value="SynGO"/>
</dbReference>
<dbReference type="GO" id="GO:0008374">
    <property type="term" value="F:O-acyltransferase activity"/>
    <property type="evidence" value="ECO:0000304"/>
    <property type="project" value="Reactome"/>
</dbReference>
<dbReference type="GO" id="GO:1990698">
    <property type="term" value="F:palmitoleoyltransferase activity"/>
    <property type="evidence" value="ECO:0000314"/>
    <property type="project" value="UniProtKB"/>
</dbReference>
<dbReference type="GO" id="GO:0017147">
    <property type="term" value="F:Wnt-protein binding"/>
    <property type="evidence" value="ECO:0000353"/>
    <property type="project" value="UniProtKB"/>
</dbReference>
<dbReference type="GO" id="GO:0009100">
    <property type="term" value="P:glycoprotein metabolic process"/>
    <property type="evidence" value="ECO:0000314"/>
    <property type="project" value="MGI"/>
</dbReference>
<dbReference type="GO" id="GO:0006497">
    <property type="term" value="P:protein lipidation"/>
    <property type="evidence" value="ECO:0000314"/>
    <property type="project" value="UniProtKB"/>
</dbReference>
<dbReference type="GO" id="GO:0045234">
    <property type="term" value="P:protein palmitoleylation"/>
    <property type="evidence" value="ECO:0000314"/>
    <property type="project" value="UniProtKB"/>
</dbReference>
<dbReference type="GO" id="GO:0099072">
    <property type="term" value="P:regulation of postsynaptic membrane neurotransmitter receptor levels"/>
    <property type="evidence" value="ECO:0000314"/>
    <property type="project" value="SynGO"/>
</dbReference>
<dbReference type="GO" id="GO:0016055">
    <property type="term" value="P:Wnt signaling pathway"/>
    <property type="evidence" value="ECO:0000314"/>
    <property type="project" value="UniProtKB"/>
</dbReference>
<dbReference type="InterPro" id="IPR049941">
    <property type="entry name" value="LPLAT_7/PORCN-like"/>
</dbReference>
<dbReference type="InterPro" id="IPR004299">
    <property type="entry name" value="MBOAT_fam"/>
</dbReference>
<dbReference type="PANTHER" id="PTHR13906">
    <property type="entry name" value="PORCUPINE"/>
    <property type="match status" value="1"/>
</dbReference>
<dbReference type="PANTHER" id="PTHR13906:SF12">
    <property type="entry name" value="PROTEIN-SERINE O-PALMITOLEOYLTRANSFERASE PORCUPINE"/>
    <property type="match status" value="1"/>
</dbReference>
<dbReference type="Pfam" id="PF03062">
    <property type="entry name" value="MBOAT"/>
    <property type="match status" value="1"/>
</dbReference>
<sequence length="461" mass="52508">MATFSRQEFFQQLLQGCLLPTVQQGLDQIWLLLTICFACRLLWRLGLPSYLKHASTVAGGFFSLYHFFQLHMVWVVLLSLLCYLVLFLCRHSSHRGVFLSVTILIYLLMGEMHMVDTVTWHKMRGAQMIVAMKAVSLGFDLDRGEVGAVPSPVEFMGYLYFVGTIVFGPWISFHSYLQAVQGRPLSRRWLKKVARSLALALLCLVLSTCVGPYLFPYFIPLDGDRLLRNKKRKARGTMVRWLRAYESAVSFHFSNYFVGFLSEATATLAGAGFTEEKDHLEWDLTVSRPLNVELPRSMVEVVTSWNLPMSYWLNNYVFKNALRLGTFSAVLVTYAASALLHGFSFHLAAVLLSLAFITYVEHVLRKRLAQILSACILSKRCLPDCSHRHRLGLGVRALNLLFGALAIFHLSYLGSLFDVDVDDTTEEQGYGMAYTVHKWSELSWASHWVTFGCWIFYRLIG</sequence>
<evidence type="ECO:0000255" key="1"/>
<evidence type="ECO:0000269" key="2">
    <source>
    </source>
</evidence>
<evidence type="ECO:0000269" key="3">
    <source>
    </source>
</evidence>
<evidence type="ECO:0000269" key="4">
    <source>
    </source>
</evidence>
<evidence type="ECO:0000269" key="5">
    <source>
    </source>
</evidence>
<evidence type="ECO:0000269" key="6">
    <source>
    </source>
</evidence>
<evidence type="ECO:0000303" key="7">
    <source>
    </source>
</evidence>
<evidence type="ECO:0000303" key="8">
    <source>
    </source>
</evidence>
<evidence type="ECO:0000303" key="9">
    <source>
    </source>
</evidence>
<evidence type="ECO:0000305" key="10"/>
<evidence type="ECO:0000312" key="11">
    <source>
        <dbReference type="MGI" id="MGI:1890212"/>
    </source>
</evidence>